<proteinExistence type="inferred from homology"/>
<sequence length="351" mass="37519">MYSLARPFLFSLDAERAHALALRSIDTAYRTGTTALLARRPVPLPTPAFGLIFPNPVGLGAGLDKNGEHIDALFALGFGFVEIGTVTPRAQEGNPKPRMFRLPEYQAVINRMGFNNLGVDALVANVQRARRTGGLLGINIGKNKDTPNEEATSDYRYCMERVYPLADYITVNISSPNTAGLRELQEEQSLRRLISDLRETQEVLSAPHGKRVPMLVKVAPDLNDRDIDAAARVLADLAVDGVIATNTTVTRTLVANHPLAAEAGGLSGAPLLGQSTLVLRRLRARLPESIPLIGVGGINSGADAVAKMAAGASLVQCYSGLVYRGPQLIGECVNAIRRRREAPSGGAVSPL</sequence>
<gene>
    <name evidence="1" type="primary">pyrD</name>
    <name type="ordered locus">XCV1835</name>
</gene>
<keyword id="KW-1003">Cell membrane</keyword>
<keyword id="KW-0285">Flavoprotein</keyword>
<keyword id="KW-0288">FMN</keyword>
<keyword id="KW-0472">Membrane</keyword>
<keyword id="KW-0560">Oxidoreductase</keyword>
<keyword id="KW-0665">Pyrimidine biosynthesis</keyword>
<accession>Q3BUJ7</accession>
<organism>
    <name type="scientific">Xanthomonas euvesicatoria pv. vesicatoria (strain 85-10)</name>
    <name type="common">Xanthomonas campestris pv. vesicatoria</name>
    <dbReference type="NCBI Taxonomy" id="316273"/>
    <lineage>
        <taxon>Bacteria</taxon>
        <taxon>Pseudomonadati</taxon>
        <taxon>Pseudomonadota</taxon>
        <taxon>Gammaproteobacteria</taxon>
        <taxon>Lysobacterales</taxon>
        <taxon>Lysobacteraceae</taxon>
        <taxon>Xanthomonas</taxon>
    </lineage>
</organism>
<feature type="chain" id="PRO_1000024244" description="Dihydroorotate dehydrogenase (quinone)">
    <location>
        <begin position="1"/>
        <end position="351"/>
    </location>
</feature>
<feature type="active site" description="Nucleophile" evidence="1">
    <location>
        <position position="175"/>
    </location>
</feature>
<feature type="binding site" evidence="1">
    <location>
        <begin position="61"/>
        <end position="65"/>
    </location>
    <ligand>
        <name>FMN</name>
        <dbReference type="ChEBI" id="CHEBI:58210"/>
    </ligand>
</feature>
<feature type="binding site" evidence="1">
    <location>
        <position position="65"/>
    </location>
    <ligand>
        <name>substrate</name>
    </ligand>
</feature>
<feature type="binding site" evidence="1">
    <location>
        <position position="85"/>
    </location>
    <ligand>
        <name>FMN</name>
        <dbReference type="ChEBI" id="CHEBI:58210"/>
    </ligand>
</feature>
<feature type="binding site" evidence="1">
    <location>
        <begin position="110"/>
        <end position="114"/>
    </location>
    <ligand>
        <name>substrate</name>
    </ligand>
</feature>
<feature type="binding site" evidence="1">
    <location>
        <position position="139"/>
    </location>
    <ligand>
        <name>FMN</name>
        <dbReference type="ChEBI" id="CHEBI:58210"/>
    </ligand>
</feature>
<feature type="binding site" evidence="1">
    <location>
        <position position="172"/>
    </location>
    <ligand>
        <name>FMN</name>
        <dbReference type="ChEBI" id="CHEBI:58210"/>
    </ligand>
</feature>
<feature type="binding site" evidence="1">
    <location>
        <position position="172"/>
    </location>
    <ligand>
        <name>substrate</name>
    </ligand>
</feature>
<feature type="binding site" evidence="1">
    <location>
        <position position="177"/>
    </location>
    <ligand>
        <name>substrate</name>
    </ligand>
</feature>
<feature type="binding site" evidence="1">
    <location>
        <position position="217"/>
    </location>
    <ligand>
        <name>FMN</name>
        <dbReference type="ChEBI" id="CHEBI:58210"/>
    </ligand>
</feature>
<feature type="binding site" evidence="1">
    <location>
        <position position="245"/>
    </location>
    <ligand>
        <name>FMN</name>
        <dbReference type="ChEBI" id="CHEBI:58210"/>
    </ligand>
</feature>
<feature type="binding site" evidence="1">
    <location>
        <begin position="246"/>
        <end position="247"/>
    </location>
    <ligand>
        <name>substrate</name>
    </ligand>
</feature>
<feature type="binding site" evidence="1">
    <location>
        <position position="268"/>
    </location>
    <ligand>
        <name>FMN</name>
        <dbReference type="ChEBI" id="CHEBI:58210"/>
    </ligand>
</feature>
<feature type="binding site" evidence="1">
    <location>
        <position position="297"/>
    </location>
    <ligand>
        <name>FMN</name>
        <dbReference type="ChEBI" id="CHEBI:58210"/>
    </ligand>
</feature>
<feature type="binding site" evidence="1">
    <location>
        <begin position="318"/>
        <end position="319"/>
    </location>
    <ligand>
        <name>FMN</name>
        <dbReference type="ChEBI" id="CHEBI:58210"/>
    </ligand>
</feature>
<evidence type="ECO:0000255" key="1">
    <source>
        <dbReference type="HAMAP-Rule" id="MF_00225"/>
    </source>
</evidence>
<dbReference type="EC" id="1.3.5.2" evidence="1"/>
<dbReference type="EMBL" id="AM039952">
    <property type="protein sequence ID" value="CAJ23512.1"/>
    <property type="molecule type" value="Genomic_DNA"/>
</dbReference>
<dbReference type="RefSeq" id="WP_011347156.1">
    <property type="nucleotide sequence ID" value="NZ_CP017190.1"/>
</dbReference>
<dbReference type="SMR" id="Q3BUJ7"/>
<dbReference type="STRING" id="456327.BJD11_13325"/>
<dbReference type="KEGG" id="xcv:XCV1835"/>
<dbReference type="eggNOG" id="COG0167">
    <property type="taxonomic scope" value="Bacteria"/>
</dbReference>
<dbReference type="HOGENOM" id="CLU_013640_2_0_6"/>
<dbReference type="UniPathway" id="UPA00070">
    <property type="reaction ID" value="UER00946"/>
</dbReference>
<dbReference type="Proteomes" id="UP000007069">
    <property type="component" value="Chromosome"/>
</dbReference>
<dbReference type="GO" id="GO:0005737">
    <property type="term" value="C:cytoplasm"/>
    <property type="evidence" value="ECO:0007669"/>
    <property type="project" value="InterPro"/>
</dbReference>
<dbReference type="GO" id="GO:0005886">
    <property type="term" value="C:plasma membrane"/>
    <property type="evidence" value="ECO:0007669"/>
    <property type="project" value="UniProtKB-SubCell"/>
</dbReference>
<dbReference type="GO" id="GO:0106430">
    <property type="term" value="F:dihydroorotate dehydrogenase (quinone) activity"/>
    <property type="evidence" value="ECO:0007669"/>
    <property type="project" value="UniProtKB-EC"/>
</dbReference>
<dbReference type="GO" id="GO:0006207">
    <property type="term" value="P:'de novo' pyrimidine nucleobase biosynthetic process"/>
    <property type="evidence" value="ECO:0007669"/>
    <property type="project" value="InterPro"/>
</dbReference>
<dbReference type="GO" id="GO:0044205">
    <property type="term" value="P:'de novo' UMP biosynthetic process"/>
    <property type="evidence" value="ECO:0007669"/>
    <property type="project" value="UniProtKB-UniRule"/>
</dbReference>
<dbReference type="CDD" id="cd04738">
    <property type="entry name" value="DHOD_2_like"/>
    <property type="match status" value="1"/>
</dbReference>
<dbReference type="FunFam" id="3.20.20.70:FF:000028">
    <property type="entry name" value="Dihydroorotate dehydrogenase (quinone)"/>
    <property type="match status" value="1"/>
</dbReference>
<dbReference type="Gene3D" id="3.20.20.70">
    <property type="entry name" value="Aldolase class I"/>
    <property type="match status" value="1"/>
</dbReference>
<dbReference type="HAMAP" id="MF_00225">
    <property type="entry name" value="DHO_dh_type2"/>
    <property type="match status" value="1"/>
</dbReference>
<dbReference type="InterPro" id="IPR013785">
    <property type="entry name" value="Aldolase_TIM"/>
</dbReference>
<dbReference type="InterPro" id="IPR050074">
    <property type="entry name" value="DHO_dehydrogenase"/>
</dbReference>
<dbReference type="InterPro" id="IPR012135">
    <property type="entry name" value="Dihydroorotate_DH_1_2"/>
</dbReference>
<dbReference type="InterPro" id="IPR005719">
    <property type="entry name" value="Dihydroorotate_DH_2"/>
</dbReference>
<dbReference type="InterPro" id="IPR005720">
    <property type="entry name" value="Dihydroorotate_DH_cat"/>
</dbReference>
<dbReference type="InterPro" id="IPR001295">
    <property type="entry name" value="Dihydroorotate_DH_CS"/>
</dbReference>
<dbReference type="NCBIfam" id="NF003644">
    <property type="entry name" value="PRK05286.1-1"/>
    <property type="match status" value="1"/>
</dbReference>
<dbReference type="NCBIfam" id="NF003645">
    <property type="entry name" value="PRK05286.1-2"/>
    <property type="match status" value="1"/>
</dbReference>
<dbReference type="NCBIfam" id="NF003646">
    <property type="entry name" value="PRK05286.1-4"/>
    <property type="match status" value="1"/>
</dbReference>
<dbReference type="NCBIfam" id="NF003652">
    <property type="entry name" value="PRK05286.2-5"/>
    <property type="match status" value="1"/>
</dbReference>
<dbReference type="NCBIfam" id="TIGR01036">
    <property type="entry name" value="pyrD_sub2"/>
    <property type="match status" value="1"/>
</dbReference>
<dbReference type="PANTHER" id="PTHR48109:SF4">
    <property type="entry name" value="DIHYDROOROTATE DEHYDROGENASE (QUINONE), MITOCHONDRIAL"/>
    <property type="match status" value="1"/>
</dbReference>
<dbReference type="PANTHER" id="PTHR48109">
    <property type="entry name" value="DIHYDROOROTATE DEHYDROGENASE (QUINONE), MITOCHONDRIAL-RELATED"/>
    <property type="match status" value="1"/>
</dbReference>
<dbReference type="Pfam" id="PF01180">
    <property type="entry name" value="DHO_dh"/>
    <property type="match status" value="1"/>
</dbReference>
<dbReference type="PIRSF" id="PIRSF000164">
    <property type="entry name" value="DHO_oxidase"/>
    <property type="match status" value="1"/>
</dbReference>
<dbReference type="SUPFAM" id="SSF51395">
    <property type="entry name" value="FMN-linked oxidoreductases"/>
    <property type="match status" value="1"/>
</dbReference>
<dbReference type="PROSITE" id="PS00911">
    <property type="entry name" value="DHODEHASE_1"/>
    <property type="match status" value="1"/>
</dbReference>
<dbReference type="PROSITE" id="PS00912">
    <property type="entry name" value="DHODEHASE_2"/>
    <property type="match status" value="1"/>
</dbReference>
<name>PYRD_XANE5</name>
<reference key="1">
    <citation type="journal article" date="2005" name="J. Bacteriol.">
        <title>Insights into genome plasticity and pathogenicity of the plant pathogenic Bacterium Xanthomonas campestris pv. vesicatoria revealed by the complete genome sequence.</title>
        <authorList>
            <person name="Thieme F."/>
            <person name="Koebnik R."/>
            <person name="Bekel T."/>
            <person name="Berger C."/>
            <person name="Boch J."/>
            <person name="Buettner D."/>
            <person name="Caldana C."/>
            <person name="Gaigalat L."/>
            <person name="Goesmann A."/>
            <person name="Kay S."/>
            <person name="Kirchner O."/>
            <person name="Lanz C."/>
            <person name="Linke B."/>
            <person name="McHardy A.C."/>
            <person name="Meyer F."/>
            <person name="Mittenhuber G."/>
            <person name="Nies D.H."/>
            <person name="Niesbach-Kloesgen U."/>
            <person name="Patschkowski T."/>
            <person name="Rueckert C."/>
            <person name="Rupp O."/>
            <person name="Schneiker S."/>
            <person name="Schuster S.C."/>
            <person name="Vorhoelter F.J."/>
            <person name="Weber E."/>
            <person name="Puehler A."/>
            <person name="Bonas U."/>
            <person name="Bartels D."/>
            <person name="Kaiser O."/>
        </authorList>
    </citation>
    <scope>NUCLEOTIDE SEQUENCE [LARGE SCALE GENOMIC DNA]</scope>
    <source>
        <strain>85-10</strain>
    </source>
</reference>
<comment type="function">
    <text evidence="1">Catalyzes the conversion of dihydroorotate to orotate with quinone as electron acceptor.</text>
</comment>
<comment type="catalytic activity">
    <reaction evidence="1">
        <text>(S)-dihydroorotate + a quinone = orotate + a quinol</text>
        <dbReference type="Rhea" id="RHEA:30187"/>
        <dbReference type="ChEBI" id="CHEBI:24646"/>
        <dbReference type="ChEBI" id="CHEBI:30839"/>
        <dbReference type="ChEBI" id="CHEBI:30864"/>
        <dbReference type="ChEBI" id="CHEBI:132124"/>
        <dbReference type="EC" id="1.3.5.2"/>
    </reaction>
</comment>
<comment type="cofactor">
    <cofactor evidence="1">
        <name>FMN</name>
        <dbReference type="ChEBI" id="CHEBI:58210"/>
    </cofactor>
    <text evidence="1">Binds 1 FMN per subunit.</text>
</comment>
<comment type="pathway">
    <text evidence="1">Pyrimidine metabolism; UMP biosynthesis via de novo pathway; orotate from (S)-dihydroorotate (quinone route): step 1/1.</text>
</comment>
<comment type="subunit">
    <text evidence="1">Monomer.</text>
</comment>
<comment type="subcellular location">
    <subcellularLocation>
        <location evidence="1">Cell membrane</location>
        <topology evidence="1">Peripheral membrane protein</topology>
    </subcellularLocation>
</comment>
<comment type="similarity">
    <text evidence="1">Belongs to the dihydroorotate dehydrogenase family. Type 2 subfamily.</text>
</comment>
<protein>
    <recommendedName>
        <fullName evidence="1">Dihydroorotate dehydrogenase (quinone)</fullName>
        <ecNumber evidence="1">1.3.5.2</ecNumber>
    </recommendedName>
    <alternativeName>
        <fullName evidence="1">DHOdehase</fullName>
        <shortName evidence="1">DHOD</shortName>
        <shortName evidence="1">DHODase</shortName>
    </alternativeName>
    <alternativeName>
        <fullName evidence="1">Dihydroorotate oxidase</fullName>
    </alternativeName>
</protein>